<gene>
    <name type="ordered locus">Ccel_3489</name>
</gene>
<organism>
    <name type="scientific">Ruminiclostridium cellulolyticum (strain ATCC 35319 / DSM 5812 / JCM 6584 / H10)</name>
    <name type="common">Clostridium cellulolyticum</name>
    <dbReference type="NCBI Taxonomy" id="394503"/>
    <lineage>
        <taxon>Bacteria</taxon>
        <taxon>Bacillati</taxon>
        <taxon>Bacillota</taxon>
        <taxon>Clostridia</taxon>
        <taxon>Eubacteriales</taxon>
        <taxon>Oscillospiraceae</taxon>
        <taxon>Ruminiclostridium</taxon>
    </lineage>
</organism>
<comment type="function">
    <text evidence="1">Could be involved in insertion of integral membrane proteins into the membrane.</text>
</comment>
<comment type="subcellular location">
    <subcellularLocation>
        <location evidence="1">Cell membrane</location>
        <topology evidence="1">Peripheral membrane protein</topology>
        <orientation evidence="1">Cytoplasmic side</orientation>
    </subcellularLocation>
</comment>
<comment type="similarity">
    <text evidence="1">Belongs to the UPF0161 family.</text>
</comment>
<proteinExistence type="inferred from homology"/>
<keyword id="KW-1003">Cell membrane</keyword>
<keyword id="KW-0472">Membrane</keyword>
<keyword id="KW-1185">Reference proteome</keyword>
<protein>
    <recommendedName>
        <fullName evidence="1">Putative membrane protein insertion efficiency factor</fullName>
    </recommendedName>
</protein>
<feature type="chain" id="PRO_1000197747" description="Putative membrane protein insertion efficiency factor">
    <location>
        <begin position="1"/>
        <end position="71"/>
    </location>
</feature>
<accession>B8I2B3</accession>
<name>YIDD_RUMCH</name>
<dbReference type="EMBL" id="CP001348">
    <property type="protein sequence ID" value="ACL77776.1"/>
    <property type="molecule type" value="Genomic_DNA"/>
</dbReference>
<dbReference type="RefSeq" id="WP_015926828.1">
    <property type="nucleotide sequence ID" value="NC_011898.1"/>
</dbReference>
<dbReference type="STRING" id="394503.Ccel_3489"/>
<dbReference type="KEGG" id="cce:Ccel_3489"/>
<dbReference type="eggNOG" id="COG0759">
    <property type="taxonomic scope" value="Bacteria"/>
</dbReference>
<dbReference type="HOGENOM" id="CLU_144811_6_0_9"/>
<dbReference type="OrthoDB" id="9801753at2"/>
<dbReference type="Proteomes" id="UP000001349">
    <property type="component" value="Chromosome"/>
</dbReference>
<dbReference type="GO" id="GO:0005886">
    <property type="term" value="C:plasma membrane"/>
    <property type="evidence" value="ECO:0007669"/>
    <property type="project" value="UniProtKB-SubCell"/>
</dbReference>
<dbReference type="HAMAP" id="MF_00386">
    <property type="entry name" value="UPF0161_YidD"/>
    <property type="match status" value="1"/>
</dbReference>
<dbReference type="InterPro" id="IPR002696">
    <property type="entry name" value="Membr_insert_effic_factor_YidD"/>
</dbReference>
<dbReference type="NCBIfam" id="TIGR00278">
    <property type="entry name" value="membrane protein insertion efficiency factor YidD"/>
    <property type="match status" value="1"/>
</dbReference>
<dbReference type="PANTHER" id="PTHR33383">
    <property type="entry name" value="MEMBRANE PROTEIN INSERTION EFFICIENCY FACTOR-RELATED"/>
    <property type="match status" value="1"/>
</dbReference>
<dbReference type="PANTHER" id="PTHR33383:SF1">
    <property type="entry name" value="MEMBRANE PROTEIN INSERTION EFFICIENCY FACTOR-RELATED"/>
    <property type="match status" value="1"/>
</dbReference>
<dbReference type="Pfam" id="PF01809">
    <property type="entry name" value="YidD"/>
    <property type="match status" value="1"/>
</dbReference>
<dbReference type="SMART" id="SM01234">
    <property type="entry name" value="Haemolytic"/>
    <property type="match status" value="1"/>
</dbReference>
<sequence length="71" mass="8278">MLKRILISIIRFYQRFISPIKVRPTCRFYPTCSQYAIEAVTKYGCVKGTFLALKRILKCHPFHPGGFDPIK</sequence>
<evidence type="ECO:0000255" key="1">
    <source>
        <dbReference type="HAMAP-Rule" id="MF_00386"/>
    </source>
</evidence>
<reference key="1">
    <citation type="submission" date="2009-01" db="EMBL/GenBank/DDBJ databases">
        <title>Complete sequence of Clostridium cellulolyticum H10.</title>
        <authorList>
            <consortium name="US DOE Joint Genome Institute"/>
            <person name="Lucas S."/>
            <person name="Copeland A."/>
            <person name="Lapidus A."/>
            <person name="Glavina del Rio T."/>
            <person name="Dalin E."/>
            <person name="Tice H."/>
            <person name="Bruce D."/>
            <person name="Goodwin L."/>
            <person name="Pitluck S."/>
            <person name="Chertkov O."/>
            <person name="Saunders E."/>
            <person name="Brettin T."/>
            <person name="Detter J.C."/>
            <person name="Han C."/>
            <person name="Larimer F."/>
            <person name="Land M."/>
            <person name="Hauser L."/>
            <person name="Kyrpides N."/>
            <person name="Ivanova N."/>
            <person name="Zhou J."/>
            <person name="Richardson P."/>
        </authorList>
    </citation>
    <scope>NUCLEOTIDE SEQUENCE [LARGE SCALE GENOMIC DNA]</scope>
    <source>
        <strain>ATCC 35319 / DSM 5812 / JCM 6584 / H10</strain>
    </source>
</reference>